<accession>P31551</accession>
<accession>P75623</accession>
<comment type="function">
    <text evidence="3">Catalyzes the reversible dehydration of L-carnitinyl-CoA to crotonobetainyl-CoA (PubMed:11551212). Can also hydrate crotonyl-CoA to hydroxybutyryl-CoA (PubMed:11551212).</text>
</comment>
<comment type="catalytic activity">
    <reaction evidence="2 3">
        <text>(R)-carnitinyl-CoA = crotonobetainyl-CoA + H2O</text>
        <dbReference type="Rhea" id="RHEA:28338"/>
        <dbReference type="ChEBI" id="CHEBI:15377"/>
        <dbReference type="ChEBI" id="CHEBI:60932"/>
        <dbReference type="ChEBI" id="CHEBI:60933"/>
        <dbReference type="EC" id="4.2.1.149"/>
    </reaction>
</comment>
<comment type="catalytic activity">
    <reaction evidence="3">
        <text>3-hydroxybutanoyl-CoA = (2E)-butenoyl-CoA + H2O</text>
        <dbReference type="Rhea" id="RHEA:45584"/>
        <dbReference type="ChEBI" id="CHEBI:15377"/>
        <dbReference type="ChEBI" id="CHEBI:57332"/>
        <dbReference type="ChEBI" id="CHEBI:78611"/>
    </reaction>
</comment>
<comment type="biophysicochemical properties">
    <kinetics>
        <KM evidence="3">12 uM for crotonobetainyl-CoA</KM>
        <KM evidence="3">38 uM for crotonyl-CoA</KM>
        <Vmax evidence="3">186.0 umol/min/mg enzyme with crotonobetainyl-CoA as substrate</Vmax>
        <Vmax evidence="3">0.3 umol/min/mg enzyme with crotonyl-CoA as substrate</Vmax>
    </kinetics>
</comment>
<comment type="pathway">
    <text evidence="2">Amine and polyamine metabolism; carnitine metabolism.</text>
</comment>
<comment type="subunit">
    <text evidence="3">Homotrimer.</text>
</comment>
<comment type="similarity">
    <text evidence="2 6">Belongs to the enoyl-CoA hydratase/isomerase family.</text>
</comment>
<comment type="sequence caution" evidence="6">
    <conflict type="erroneous initiation">
        <sequence resource="EMBL-CDS" id="BAB96605"/>
    </conflict>
    <text>Extended N-terminus.</text>
</comment>
<comment type="sequence caution" evidence="6">
    <conflict type="erroneous initiation">
        <sequence resource="EMBL-CDS" id="CAA52114"/>
    </conflict>
    <text>Extended N-terminus.</text>
</comment>
<reference key="1">
    <citation type="journal article" date="1994" name="Mol. Microbiol.">
        <title>Molecular characterization of the cai operon necessary for carnitine metabolism in Escherichia coli.</title>
        <authorList>
            <person name="Eichler K."/>
            <person name="Bourgis F."/>
            <person name="Buchet A."/>
            <person name="Kleber H.-P."/>
            <person name="Mandrand-Berthelot M.-A."/>
        </authorList>
    </citation>
    <scope>NUCLEOTIDE SEQUENCE [GENOMIC DNA]</scope>
    <scope>CHARACTERIZATION</scope>
    <source>
        <strain>O44:K74</strain>
    </source>
</reference>
<reference key="2">
    <citation type="journal article" date="1992" name="Nucleic Acids Res.">
        <title>Systematic sequencing of the Escherichia coli genome: analysis of the 0-2.4 min region.</title>
        <authorList>
            <person name="Yura T."/>
            <person name="Mori H."/>
            <person name="Nagai H."/>
            <person name="Nagata T."/>
            <person name="Ishihama A."/>
            <person name="Fujita N."/>
            <person name="Isono K."/>
            <person name="Mizobuchi K."/>
            <person name="Nakata A."/>
        </authorList>
    </citation>
    <scope>NUCLEOTIDE SEQUENCE [LARGE SCALE GENOMIC DNA]</scope>
    <source>
        <strain>K12</strain>
    </source>
</reference>
<reference key="3">
    <citation type="journal article" date="1997" name="Science">
        <title>The complete genome sequence of Escherichia coli K-12.</title>
        <authorList>
            <person name="Blattner F.R."/>
            <person name="Plunkett G. III"/>
            <person name="Bloch C.A."/>
            <person name="Perna N.T."/>
            <person name="Burland V."/>
            <person name="Riley M."/>
            <person name="Collado-Vides J."/>
            <person name="Glasner J.D."/>
            <person name="Rode C.K."/>
            <person name="Mayhew G.F."/>
            <person name="Gregor J."/>
            <person name="Davis N.W."/>
            <person name="Kirkpatrick H.A."/>
            <person name="Goeden M.A."/>
            <person name="Rose D.J."/>
            <person name="Mau B."/>
            <person name="Shao Y."/>
        </authorList>
    </citation>
    <scope>NUCLEOTIDE SEQUENCE [LARGE SCALE GENOMIC DNA]</scope>
    <source>
        <strain>K12 / MG1655 / ATCC 47076</strain>
    </source>
</reference>
<reference key="4">
    <citation type="journal article" date="2006" name="Mol. Syst. Biol.">
        <title>Highly accurate genome sequences of Escherichia coli K-12 strains MG1655 and W3110.</title>
        <authorList>
            <person name="Hayashi K."/>
            <person name="Morooka N."/>
            <person name="Yamamoto Y."/>
            <person name="Fujita K."/>
            <person name="Isono K."/>
            <person name="Choi S."/>
            <person name="Ohtsubo E."/>
            <person name="Baba T."/>
            <person name="Wanner B.L."/>
            <person name="Mori H."/>
            <person name="Horiuchi T."/>
        </authorList>
    </citation>
    <scope>NUCLEOTIDE SEQUENCE [LARGE SCALE GENOMIC DNA]</scope>
    <scope>SEQUENCE REVISION TO 108</scope>
    <source>
        <strain>K12 / W3110 / ATCC 27325 / DSM 5911</strain>
    </source>
</reference>
<reference key="5">
    <citation type="journal article" date="2001" name="Biochemistry">
        <title>Involvement of coenzyme A esters and two new enzymes, an enoyl-CoA hydratase and a CoA-transferase, in the hydration of crotonobetaine to L-carnitine by Escherichia coli.</title>
        <authorList>
            <person name="Elssner T."/>
            <person name="Engemann C."/>
            <person name="Baumgart K."/>
            <person name="Kleber H.-P."/>
        </authorList>
    </citation>
    <scope>PROTEIN SEQUENCE OF 2-11</scope>
    <scope>FUNCTION</scope>
    <scope>CATALYTIC ACTIVITY</scope>
    <scope>BIOPHYSICOCHEMICAL PROPERTIES</scope>
    <scope>SUBUNIT</scope>
    <source>
        <strain>O44:K74</strain>
    </source>
</reference>
<keyword id="KW-0903">Direct protein sequencing</keyword>
<keyword id="KW-0456">Lyase</keyword>
<keyword id="KW-1185">Reference proteome</keyword>
<organism>
    <name type="scientific">Escherichia coli (strain K12)</name>
    <dbReference type="NCBI Taxonomy" id="83333"/>
    <lineage>
        <taxon>Bacteria</taxon>
        <taxon>Pseudomonadati</taxon>
        <taxon>Pseudomonadota</taxon>
        <taxon>Gammaproteobacteria</taxon>
        <taxon>Enterobacterales</taxon>
        <taxon>Enterobacteriaceae</taxon>
        <taxon>Escherichia</taxon>
    </lineage>
</organism>
<sequence>MSESLHLTRNGSILEITLDRPKANAIDAKTSFEMGEVFLNFRDDPQLRVAIITGAGEKFFSAGWDLKAAAEGEAPDADFGPGGFAGLTEIFNLDKPVIAAVNGYAFGGGFELALAADFIVCADNASFALPEAKLGIVPDSGGVLRLPKILPPAIVNEMVMTGRRMGAEEALRWGIVNRVVSQAELMDNARELAQQLVNSAPLAIAALKEIYRTTSEMPVEEAYRYIRSGVLKHYPSVLHSEDAIEGPLAFAEKRDPVWKGR</sequence>
<feature type="initiator methionine" description="Removed" evidence="3">
    <location>
        <position position="1"/>
    </location>
</feature>
<feature type="chain" id="PRO_0000109348" description="Carnitinyl-CoA dehydratase">
    <location>
        <begin position="2"/>
        <end position="261"/>
    </location>
</feature>
<feature type="active site" description="Nucleophile" evidence="1 2">
    <location>
        <position position="111"/>
    </location>
</feature>
<feature type="active site" description="Proton acceptor" evidence="1 2">
    <location>
        <position position="131"/>
    </location>
</feature>
<feature type="sequence variant" description="In strain: O44:K74.">
    <original>P</original>
    <variation>L</variation>
    <location>
        <position position="247"/>
    </location>
</feature>
<proteinExistence type="evidence at protein level"/>
<protein>
    <recommendedName>
        <fullName evidence="2 6">Carnitinyl-CoA dehydratase</fullName>
        <ecNumber evidence="2 3">4.2.1.149</ecNumber>
    </recommendedName>
    <alternativeName>
        <fullName evidence="2 4">Crotonobetainyl-CoA hydratase</fullName>
    </alternativeName>
</protein>
<dbReference type="EC" id="4.2.1.149" evidence="2 3"/>
<dbReference type="EMBL" id="X73904">
    <property type="protein sequence ID" value="CAA52114.1"/>
    <property type="status" value="ALT_INIT"/>
    <property type="molecule type" value="Genomic_DNA"/>
</dbReference>
<dbReference type="EMBL" id="U00096">
    <property type="protein sequence ID" value="AAC73147.2"/>
    <property type="molecule type" value="Genomic_DNA"/>
</dbReference>
<dbReference type="EMBL" id="AP009048">
    <property type="protein sequence ID" value="BAB96605.2"/>
    <property type="status" value="ALT_INIT"/>
    <property type="molecule type" value="Genomic_DNA"/>
</dbReference>
<dbReference type="PIR" id="D64724">
    <property type="entry name" value="D64724"/>
</dbReference>
<dbReference type="RefSeq" id="NP_414578.2">
    <property type="nucleotide sequence ID" value="NC_000913.3"/>
</dbReference>
<dbReference type="RefSeq" id="WP_001295419.1">
    <property type="nucleotide sequence ID" value="NZ_LN832404.1"/>
</dbReference>
<dbReference type="SMR" id="P31551"/>
<dbReference type="BioGRID" id="4261692">
    <property type="interactions" value="577"/>
</dbReference>
<dbReference type="BioGRID" id="853243">
    <property type="interactions" value="1"/>
</dbReference>
<dbReference type="FunCoup" id="P31551">
    <property type="interactions" value="105"/>
</dbReference>
<dbReference type="IntAct" id="P31551">
    <property type="interactions" value="9"/>
</dbReference>
<dbReference type="STRING" id="511145.b0036"/>
<dbReference type="PaxDb" id="511145-b0036"/>
<dbReference type="EnsemblBacteria" id="AAC73147">
    <property type="protein sequence ID" value="AAC73147"/>
    <property type="gene ID" value="b0036"/>
</dbReference>
<dbReference type="GeneID" id="948995"/>
<dbReference type="KEGG" id="ecj:JW0035"/>
<dbReference type="KEGG" id="eco:b0036"/>
<dbReference type="KEGG" id="ecoc:C3026_00190"/>
<dbReference type="PATRIC" id="fig|1411691.4.peg.2247"/>
<dbReference type="EchoBASE" id="EB1518"/>
<dbReference type="eggNOG" id="COG1024">
    <property type="taxonomic scope" value="Bacteria"/>
</dbReference>
<dbReference type="HOGENOM" id="CLU_009834_7_6_6"/>
<dbReference type="InParanoid" id="P31551"/>
<dbReference type="OMA" id="QYVAHVE"/>
<dbReference type="OrthoDB" id="9777711at2"/>
<dbReference type="PhylomeDB" id="P31551"/>
<dbReference type="BioCyc" id="EcoCyc:CARNRACE-MONOMER"/>
<dbReference type="BioCyc" id="MetaCyc:CARNRACE-MONOMER"/>
<dbReference type="BRENDA" id="4.2.1.149">
    <property type="organism ID" value="2026"/>
</dbReference>
<dbReference type="SABIO-RK" id="P31551"/>
<dbReference type="UniPathway" id="UPA00117"/>
<dbReference type="PRO" id="PR:P31551"/>
<dbReference type="Proteomes" id="UP000000625">
    <property type="component" value="Chromosome"/>
</dbReference>
<dbReference type="GO" id="GO:0008809">
    <property type="term" value="F:carnitine racemase activity"/>
    <property type="evidence" value="ECO:0000269"/>
    <property type="project" value="EcoliWiki"/>
</dbReference>
<dbReference type="GO" id="GO:0120092">
    <property type="term" value="F:crotonyl-CoA hydratase activity"/>
    <property type="evidence" value="ECO:0007669"/>
    <property type="project" value="RHEA"/>
</dbReference>
<dbReference type="GO" id="GO:0008735">
    <property type="term" value="F:L-carnitine CoA-transferase activity"/>
    <property type="evidence" value="ECO:0007669"/>
    <property type="project" value="RHEA"/>
</dbReference>
<dbReference type="GO" id="GO:0042413">
    <property type="term" value="P:carnitine catabolic process"/>
    <property type="evidence" value="ECO:0000269"/>
    <property type="project" value="EcoliWiki"/>
</dbReference>
<dbReference type="GO" id="GO:0006635">
    <property type="term" value="P:fatty acid beta-oxidation"/>
    <property type="evidence" value="ECO:0000318"/>
    <property type="project" value="GO_Central"/>
</dbReference>
<dbReference type="CDD" id="cd06558">
    <property type="entry name" value="crotonase-like"/>
    <property type="match status" value="1"/>
</dbReference>
<dbReference type="FunFam" id="1.10.12.10:FF:000005">
    <property type="entry name" value="Carnitinyl-CoA dehydratase"/>
    <property type="match status" value="1"/>
</dbReference>
<dbReference type="FunFam" id="3.90.226.10:FF:000009">
    <property type="entry name" value="Carnitinyl-CoA dehydratase"/>
    <property type="match status" value="1"/>
</dbReference>
<dbReference type="Gene3D" id="3.90.226.10">
    <property type="entry name" value="2-enoyl-CoA Hydratase, Chain A, domain 1"/>
    <property type="match status" value="1"/>
</dbReference>
<dbReference type="Gene3D" id="1.10.12.10">
    <property type="entry name" value="Lyase 2-enoyl-coa Hydratase, Chain A, domain 2"/>
    <property type="match status" value="1"/>
</dbReference>
<dbReference type="HAMAP" id="MF_01051">
    <property type="entry name" value="CaiD"/>
    <property type="match status" value="1"/>
</dbReference>
<dbReference type="InterPro" id="IPR022852">
    <property type="entry name" value="Carnitinyl_CoA_dehydratase"/>
</dbReference>
<dbReference type="InterPro" id="IPR029045">
    <property type="entry name" value="ClpP/crotonase-like_dom_sf"/>
</dbReference>
<dbReference type="InterPro" id="IPR018376">
    <property type="entry name" value="Enoyl-CoA_hyd/isom_CS"/>
</dbReference>
<dbReference type="InterPro" id="IPR001753">
    <property type="entry name" value="Enoyl-CoA_hydra/iso"/>
</dbReference>
<dbReference type="InterPro" id="IPR014748">
    <property type="entry name" value="Enoyl-CoA_hydra_C"/>
</dbReference>
<dbReference type="NCBIfam" id="NF002936">
    <property type="entry name" value="PRK03580.1"/>
    <property type="match status" value="1"/>
</dbReference>
<dbReference type="PANTHER" id="PTHR11941:SF54">
    <property type="entry name" value="ENOYL-COA HYDRATASE, MITOCHONDRIAL"/>
    <property type="match status" value="1"/>
</dbReference>
<dbReference type="PANTHER" id="PTHR11941">
    <property type="entry name" value="ENOYL-COA HYDRATASE-RELATED"/>
    <property type="match status" value="1"/>
</dbReference>
<dbReference type="Pfam" id="PF00378">
    <property type="entry name" value="ECH_1"/>
    <property type="match status" value="1"/>
</dbReference>
<dbReference type="SUPFAM" id="SSF52096">
    <property type="entry name" value="ClpP/crotonase"/>
    <property type="match status" value="1"/>
</dbReference>
<dbReference type="PROSITE" id="PS00166">
    <property type="entry name" value="ENOYL_COA_HYDRATASE"/>
    <property type="match status" value="1"/>
</dbReference>
<name>CAID_ECOLI</name>
<evidence type="ECO:0000250" key="1">
    <source>
        <dbReference type="UniProtKB" id="Q5LLW6"/>
    </source>
</evidence>
<evidence type="ECO:0000255" key="2">
    <source>
        <dbReference type="HAMAP-Rule" id="MF_01051"/>
    </source>
</evidence>
<evidence type="ECO:0000269" key="3">
    <source>
    </source>
</evidence>
<evidence type="ECO:0000303" key="4">
    <source>
    </source>
</evidence>
<evidence type="ECO:0000303" key="5">
    <source>
    </source>
</evidence>
<evidence type="ECO:0000305" key="6"/>
<gene>
    <name evidence="2 5" type="primary">caiD</name>
    <name type="synonym">yaaL</name>
    <name type="ordered locus">b0036</name>
    <name type="ordered locus">JW0035</name>
</gene>